<feature type="chain" id="PRO_1000093210" description="Phosphomethylpyrimidine synthase">
    <location>
        <begin position="1"/>
        <end position="433"/>
    </location>
</feature>
<feature type="binding site" evidence="1">
    <location>
        <position position="69"/>
    </location>
    <ligand>
        <name>substrate</name>
    </ligand>
</feature>
<feature type="binding site" evidence="1">
    <location>
        <position position="98"/>
    </location>
    <ligand>
        <name>substrate</name>
    </ligand>
</feature>
<feature type="binding site" evidence="1">
    <location>
        <position position="127"/>
    </location>
    <ligand>
        <name>substrate</name>
    </ligand>
</feature>
<feature type="binding site" evidence="1">
    <location>
        <position position="163"/>
    </location>
    <ligand>
        <name>substrate</name>
    </ligand>
</feature>
<feature type="binding site" evidence="1">
    <location>
        <begin position="185"/>
        <end position="187"/>
    </location>
    <ligand>
        <name>substrate</name>
    </ligand>
</feature>
<feature type="binding site" evidence="1">
    <location>
        <begin position="226"/>
        <end position="229"/>
    </location>
    <ligand>
        <name>substrate</name>
    </ligand>
</feature>
<feature type="binding site" evidence="1">
    <location>
        <position position="265"/>
    </location>
    <ligand>
        <name>substrate</name>
    </ligand>
</feature>
<feature type="binding site" evidence="1">
    <location>
        <position position="269"/>
    </location>
    <ligand>
        <name>Zn(2+)</name>
        <dbReference type="ChEBI" id="CHEBI:29105"/>
    </ligand>
</feature>
<feature type="binding site" evidence="1">
    <location>
        <position position="292"/>
    </location>
    <ligand>
        <name>substrate</name>
    </ligand>
</feature>
<feature type="binding site" evidence="1">
    <location>
        <position position="333"/>
    </location>
    <ligand>
        <name>Zn(2+)</name>
        <dbReference type="ChEBI" id="CHEBI:29105"/>
    </ligand>
</feature>
<feature type="binding site" evidence="1">
    <location>
        <position position="409"/>
    </location>
    <ligand>
        <name>[4Fe-4S] cluster</name>
        <dbReference type="ChEBI" id="CHEBI:49883"/>
        <note>4Fe-4S-S-AdoMet</note>
    </ligand>
</feature>
<feature type="binding site" evidence="1">
    <location>
        <position position="412"/>
    </location>
    <ligand>
        <name>[4Fe-4S] cluster</name>
        <dbReference type="ChEBI" id="CHEBI:49883"/>
        <note>4Fe-4S-S-AdoMet</note>
    </ligand>
</feature>
<feature type="binding site" evidence="1">
    <location>
        <position position="416"/>
    </location>
    <ligand>
        <name>[4Fe-4S] cluster</name>
        <dbReference type="ChEBI" id="CHEBI:49883"/>
        <note>4Fe-4S-S-AdoMet</note>
    </ligand>
</feature>
<reference key="1">
    <citation type="journal article" date="2008" name="DNA Res.">
        <title>Complete genome sequence of Finegoldia magna, an anaerobic opportunistic pathogen.</title>
        <authorList>
            <person name="Goto T."/>
            <person name="Yamashita A."/>
            <person name="Hirakawa H."/>
            <person name="Matsutani M."/>
            <person name="Todo K."/>
            <person name="Ohshima K."/>
            <person name="Toh H."/>
            <person name="Miyamoto K."/>
            <person name="Kuhara S."/>
            <person name="Hattori M."/>
            <person name="Shimizu T."/>
            <person name="Akimoto S."/>
        </authorList>
    </citation>
    <scope>NUCLEOTIDE SEQUENCE [LARGE SCALE GENOMIC DNA]</scope>
    <source>
        <strain>ATCC 29328 / DSM 20472 / WAL 2508</strain>
    </source>
</reference>
<dbReference type="EC" id="4.1.99.17" evidence="1"/>
<dbReference type="EMBL" id="AP008971">
    <property type="protein sequence ID" value="BAG08846.1"/>
    <property type="molecule type" value="Genomic_DNA"/>
</dbReference>
<dbReference type="RefSeq" id="WP_012291083.1">
    <property type="nucleotide sequence ID" value="NC_010376.1"/>
</dbReference>
<dbReference type="SMR" id="B0S3A6"/>
<dbReference type="STRING" id="334413.FMG_1428"/>
<dbReference type="KEGG" id="fma:FMG_1428"/>
<dbReference type="eggNOG" id="COG0422">
    <property type="taxonomic scope" value="Bacteria"/>
</dbReference>
<dbReference type="HOGENOM" id="CLU_013181_2_2_9"/>
<dbReference type="UniPathway" id="UPA00060"/>
<dbReference type="Proteomes" id="UP000001319">
    <property type="component" value="Chromosome"/>
</dbReference>
<dbReference type="GO" id="GO:0005829">
    <property type="term" value="C:cytosol"/>
    <property type="evidence" value="ECO:0007669"/>
    <property type="project" value="TreeGrafter"/>
</dbReference>
<dbReference type="GO" id="GO:0051539">
    <property type="term" value="F:4 iron, 4 sulfur cluster binding"/>
    <property type="evidence" value="ECO:0007669"/>
    <property type="project" value="UniProtKB-KW"/>
</dbReference>
<dbReference type="GO" id="GO:0016830">
    <property type="term" value="F:carbon-carbon lyase activity"/>
    <property type="evidence" value="ECO:0007669"/>
    <property type="project" value="InterPro"/>
</dbReference>
<dbReference type="GO" id="GO:0008270">
    <property type="term" value="F:zinc ion binding"/>
    <property type="evidence" value="ECO:0007669"/>
    <property type="project" value="UniProtKB-UniRule"/>
</dbReference>
<dbReference type="GO" id="GO:0009228">
    <property type="term" value="P:thiamine biosynthetic process"/>
    <property type="evidence" value="ECO:0007669"/>
    <property type="project" value="UniProtKB-KW"/>
</dbReference>
<dbReference type="GO" id="GO:0009229">
    <property type="term" value="P:thiamine diphosphate biosynthetic process"/>
    <property type="evidence" value="ECO:0007669"/>
    <property type="project" value="UniProtKB-UniRule"/>
</dbReference>
<dbReference type="FunFam" id="3.20.20.540:FF:000001">
    <property type="entry name" value="Phosphomethylpyrimidine synthase"/>
    <property type="match status" value="1"/>
</dbReference>
<dbReference type="Gene3D" id="6.10.250.620">
    <property type="match status" value="1"/>
</dbReference>
<dbReference type="Gene3D" id="3.20.20.540">
    <property type="entry name" value="Radical SAM ThiC family, central domain"/>
    <property type="match status" value="1"/>
</dbReference>
<dbReference type="HAMAP" id="MF_00089">
    <property type="entry name" value="ThiC"/>
    <property type="match status" value="1"/>
</dbReference>
<dbReference type="InterPro" id="IPR037509">
    <property type="entry name" value="ThiC"/>
</dbReference>
<dbReference type="InterPro" id="IPR038521">
    <property type="entry name" value="ThiC/Bza_core_dom"/>
</dbReference>
<dbReference type="InterPro" id="IPR002817">
    <property type="entry name" value="ThiC/BzaA/B"/>
</dbReference>
<dbReference type="NCBIfam" id="NF009895">
    <property type="entry name" value="PRK13352.1"/>
    <property type="match status" value="1"/>
</dbReference>
<dbReference type="NCBIfam" id="TIGR00190">
    <property type="entry name" value="thiC"/>
    <property type="match status" value="1"/>
</dbReference>
<dbReference type="PANTHER" id="PTHR30557:SF1">
    <property type="entry name" value="PHOSPHOMETHYLPYRIMIDINE SYNTHASE, CHLOROPLASTIC"/>
    <property type="match status" value="1"/>
</dbReference>
<dbReference type="PANTHER" id="PTHR30557">
    <property type="entry name" value="THIAMINE BIOSYNTHESIS PROTEIN THIC"/>
    <property type="match status" value="1"/>
</dbReference>
<dbReference type="Pfam" id="PF01964">
    <property type="entry name" value="ThiC_Rad_SAM"/>
    <property type="match status" value="1"/>
</dbReference>
<dbReference type="SFLD" id="SFLDF00407">
    <property type="entry name" value="phosphomethylpyrimidine_syntha"/>
    <property type="match status" value="1"/>
</dbReference>
<dbReference type="SFLD" id="SFLDG01114">
    <property type="entry name" value="phosphomethylpyrimidine_syntha"/>
    <property type="match status" value="1"/>
</dbReference>
<dbReference type="SFLD" id="SFLDS00113">
    <property type="entry name" value="Radical_SAM_Phosphomethylpyrim"/>
    <property type="match status" value="1"/>
</dbReference>
<sequence>MEYTTQLDAAKKKIITKEMKRVAQKENIDVEILREKIEKGYVVIPANKNHKSLDAHGVGEGLKTKINVNLGISKDCYNIEKEMEKVRVAIDMDAEAIMDLSNYGKTRKFREELIGYSPAMIGSVPMYDCVGMLDKELKDITEEEFLEVVEQHAKDGVDFITIHVGLTRDIAQHLKTTDRITKIVSRGGSLLFAWMIVNNKENPLVTRYDDILEICEKYDVTLSLGDALRPGCINDATDDLQIQELINLSRMAKRAYEKNVQVMIEGPGHVPIDQIEANMKIEKTICNNAPFYVLGPLVTDIAPGYDHITSAIGGAIAASTGADFLCYVTPAEHLRLPNLEDMKEGIIATKIAAHAGDIAKKIPGAKERDDEMSRARFNLDWEKMFELAIDSEKPKKYRKESQPIEEDSCTMCGKMCSMRTVKKVLNGEDVNLI</sequence>
<accession>B0S3A6</accession>
<proteinExistence type="inferred from homology"/>
<comment type="function">
    <text evidence="1">Catalyzes the synthesis of the hydroxymethylpyrimidine phosphate (HMP-P) moiety of thiamine from aminoimidazole ribotide (AIR) in a radical S-adenosyl-L-methionine (SAM)-dependent reaction.</text>
</comment>
<comment type="catalytic activity">
    <reaction evidence="1">
        <text>5-amino-1-(5-phospho-beta-D-ribosyl)imidazole + S-adenosyl-L-methionine = 4-amino-2-methyl-5-(phosphooxymethyl)pyrimidine + CO + 5'-deoxyadenosine + formate + L-methionine + 3 H(+)</text>
        <dbReference type="Rhea" id="RHEA:24840"/>
        <dbReference type="ChEBI" id="CHEBI:15378"/>
        <dbReference type="ChEBI" id="CHEBI:15740"/>
        <dbReference type="ChEBI" id="CHEBI:17245"/>
        <dbReference type="ChEBI" id="CHEBI:17319"/>
        <dbReference type="ChEBI" id="CHEBI:57844"/>
        <dbReference type="ChEBI" id="CHEBI:58354"/>
        <dbReference type="ChEBI" id="CHEBI:59789"/>
        <dbReference type="ChEBI" id="CHEBI:137981"/>
        <dbReference type="EC" id="4.1.99.17"/>
    </reaction>
</comment>
<comment type="cofactor">
    <cofactor evidence="1">
        <name>[4Fe-4S] cluster</name>
        <dbReference type="ChEBI" id="CHEBI:49883"/>
    </cofactor>
    <text evidence="1">Binds 1 [4Fe-4S] cluster per subunit. The cluster is coordinated with 3 cysteines and an exchangeable S-adenosyl-L-methionine.</text>
</comment>
<comment type="pathway">
    <text evidence="1">Cofactor biosynthesis; thiamine diphosphate biosynthesis.</text>
</comment>
<comment type="similarity">
    <text evidence="1">Belongs to the ThiC family.</text>
</comment>
<gene>
    <name evidence="1" type="primary">thiC</name>
    <name type="ordered locus">FMG_1428</name>
</gene>
<organism>
    <name type="scientific">Finegoldia magna (strain ATCC 29328 / DSM 20472 / WAL 2508)</name>
    <name type="common">Peptostreptococcus magnus</name>
    <dbReference type="NCBI Taxonomy" id="334413"/>
    <lineage>
        <taxon>Bacteria</taxon>
        <taxon>Bacillati</taxon>
        <taxon>Bacillota</taxon>
        <taxon>Tissierellia</taxon>
        <taxon>Tissierellales</taxon>
        <taxon>Peptoniphilaceae</taxon>
        <taxon>Finegoldia</taxon>
    </lineage>
</organism>
<protein>
    <recommendedName>
        <fullName evidence="1">Phosphomethylpyrimidine synthase</fullName>
        <ecNumber evidence="1">4.1.99.17</ecNumber>
    </recommendedName>
    <alternativeName>
        <fullName evidence="1">Hydroxymethylpyrimidine phosphate synthase</fullName>
        <shortName evidence="1">HMP-P synthase</shortName>
        <shortName evidence="1">HMP-phosphate synthase</shortName>
        <shortName evidence="1">HMPP synthase</shortName>
    </alternativeName>
    <alternativeName>
        <fullName evidence="1">Thiamine biosynthesis protein ThiC</fullName>
    </alternativeName>
</protein>
<keyword id="KW-0004">4Fe-4S</keyword>
<keyword id="KW-0408">Iron</keyword>
<keyword id="KW-0411">Iron-sulfur</keyword>
<keyword id="KW-0456">Lyase</keyword>
<keyword id="KW-0479">Metal-binding</keyword>
<keyword id="KW-1185">Reference proteome</keyword>
<keyword id="KW-0949">S-adenosyl-L-methionine</keyword>
<keyword id="KW-0784">Thiamine biosynthesis</keyword>
<keyword id="KW-0862">Zinc</keyword>
<name>THIC_FINM2</name>
<evidence type="ECO:0000255" key="1">
    <source>
        <dbReference type="HAMAP-Rule" id="MF_00089"/>
    </source>
</evidence>